<proteinExistence type="inferred from homology"/>
<keyword id="KW-0285">Flavoprotein</keyword>
<keyword id="KW-0288">FMN</keyword>
<keyword id="KW-0521">NADP</keyword>
<keyword id="KW-0560">Oxidoreductase</keyword>
<keyword id="KW-1185">Reference proteome</keyword>
<keyword id="KW-0694">RNA-binding</keyword>
<keyword id="KW-0819">tRNA processing</keyword>
<keyword id="KW-0820">tRNA-binding</keyword>
<organism>
    <name type="scientific">Aquifex aeolicus (strain VF5)</name>
    <dbReference type="NCBI Taxonomy" id="224324"/>
    <lineage>
        <taxon>Bacteria</taxon>
        <taxon>Pseudomonadati</taxon>
        <taxon>Aquificota</taxon>
        <taxon>Aquificia</taxon>
        <taxon>Aquificales</taxon>
        <taxon>Aquificaceae</taxon>
        <taxon>Aquifex</taxon>
    </lineage>
</organism>
<evidence type="ECO:0000250" key="1">
    <source>
        <dbReference type="UniProtKB" id="P33371"/>
    </source>
</evidence>
<evidence type="ECO:0000250" key="2">
    <source>
        <dbReference type="UniProtKB" id="Q5SMC7"/>
    </source>
</evidence>
<evidence type="ECO:0000305" key="3"/>
<comment type="function">
    <text evidence="1">Catalyzes the synthesis of 5,6-dihydrouridine (D), a modified base found in the D-loop of most tRNAs, via the reduction of the C5-C6 double bond in target uridines.</text>
</comment>
<comment type="catalytic activity">
    <reaction evidence="1">
        <text>a 5,6-dihydrouridine in tRNA + NAD(+) = a uridine in tRNA + NADH + H(+)</text>
        <dbReference type="Rhea" id="RHEA:54452"/>
        <dbReference type="Rhea" id="RHEA-COMP:13339"/>
        <dbReference type="Rhea" id="RHEA-COMP:13887"/>
        <dbReference type="ChEBI" id="CHEBI:15378"/>
        <dbReference type="ChEBI" id="CHEBI:57540"/>
        <dbReference type="ChEBI" id="CHEBI:57945"/>
        <dbReference type="ChEBI" id="CHEBI:65315"/>
        <dbReference type="ChEBI" id="CHEBI:74443"/>
    </reaction>
</comment>
<comment type="catalytic activity">
    <reaction evidence="1">
        <text>a 5,6-dihydrouridine in tRNA + NADP(+) = a uridine in tRNA + NADPH + H(+)</text>
        <dbReference type="Rhea" id="RHEA:23624"/>
        <dbReference type="Rhea" id="RHEA-COMP:13339"/>
        <dbReference type="Rhea" id="RHEA-COMP:13887"/>
        <dbReference type="ChEBI" id="CHEBI:15378"/>
        <dbReference type="ChEBI" id="CHEBI:57783"/>
        <dbReference type="ChEBI" id="CHEBI:58349"/>
        <dbReference type="ChEBI" id="CHEBI:65315"/>
        <dbReference type="ChEBI" id="CHEBI:74443"/>
    </reaction>
</comment>
<comment type="cofactor">
    <cofactor evidence="1">
        <name>FMN</name>
        <dbReference type="ChEBI" id="CHEBI:58210"/>
    </cofactor>
</comment>
<comment type="similarity">
    <text evidence="3">Belongs to the Dus family.</text>
</comment>
<reference key="1">
    <citation type="journal article" date="1998" name="Nature">
        <title>The complete genome of the hyperthermophilic bacterium Aquifex aeolicus.</title>
        <authorList>
            <person name="Deckert G."/>
            <person name="Warren P.V."/>
            <person name="Gaasterland T."/>
            <person name="Young W.G."/>
            <person name="Lenox A.L."/>
            <person name="Graham D.E."/>
            <person name="Overbeek R."/>
            <person name="Snead M.A."/>
            <person name="Keller M."/>
            <person name="Aujay M."/>
            <person name="Huber R."/>
            <person name="Feldman R.A."/>
            <person name="Short J.M."/>
            <person name="Olsen G.J."/>
            <person name="Swanson R.V."/>
        </authorList>
    </citation>
    <scope>NUCLEOTIDE SEQUENCE [LARGE SCALE GENOMIC DNA]</scope>
    <source>
        <strain>VF5</strain>
    </source>
</reference>
<dbReference type="EC" id="1.3.1.-"/>
<dbReference type="EMBL" id="AE000657">
    <property type="protein sequence ID" value="AAC07506.1"/>
    <property type="molecule type" value="Genomic_DNA"/>
</dbReference>
<dbReference type="PIR" id="C70438">
    <property type="entry name" value="C70438"/>
</dbReference>
<dbReference type="RefSeq" id="NP_214098.1">
    <property type="nucleotide sequence ID" value="NC_000918.1"/>
</dbReference>
<dbReference type="RefSeq" id="WP_010881036.1">
    <property type="nucleotide sequence ID" value="NC_000918.1"/>
</dbReference>
<dbReference type="SMR" id="O67533"/>
<dbReference type="FunCoup" id="O67533">
    <property type="interactions" value="421"/>
</dbReference>
<dbReference type="STRING" id="224324.aq_1598"/>
<dbReference type="EnsemblBacteria" id="AAC07506">
    <property type="protein sequence ID" value="AAC07506"/>
    <property type="gene ID" value="aq_1598"/>
</dbReference>
<dbReference type="KEGG" id="aae:aq_1598"/>
<dbReference type="PATRIC" id="fig|224324.8.peg.1234"/>
<dbReference type="eggNOG" id="COG0042">
    <property type="taxonomic scope" value="Bacteria"/>
</dbReference>
<dbReference type="HOGENOM" id="CLU_013299_0_3_0"/>
<dbReference type="InParanoid" id="O67533"/>
<dbReference type="OrthoDB" id="9764501at2"/>
<dbReference type="Proteomes" id="UP000000798">
    <property type="component" value="Chromosome"/>
</dbReference>
<dbReference type="GO" id="GO:0050660">
    <property type="term" value="F:flavin adenine dinucleotide binding"/>
    <property type="evidence" value="ECO:0007669"/>
    <property type="project" value="InterPro"/>
</dbReference>
<dbReference type="GO" id="GO:0000049">
    <property type="term" value="F:tRNA binding"/>
    <property type="evidence" value="ECO:0007669"/>
    <property type="project" value="UniProtKB-KW"/>
</dbReference>
<dbReference type="GO" id="GO:0017150">
    <property type="term" value="F:tRNA dihydrouridine synthase activity"/>
    <property type="evidence" value="ECO:0007669"/>
    <property type="project" value="InterPro"/>
</dbReference>
<dbReference type="CDD" id="cd02801">
    <property type="entry name" value="DUS_like_FMN"/>
    <property type="match status" value="1"/>
</dbReference>
<dbReference type="Gene3D" id="3.20.20.70">
    <property type="entry name" value="Aldolase class I"/>
    <property type="match status" value="1"/>
</dbReference>
<dbReference type="Gene3D" id="1.10.1200.80">
    <property type="entry name" value="Putative flavin oxidoreducatase, domain 2"/>
    <property type="match status" value="1"/>
</dbReference>
<dbReference type="InterPro" id="IPR013785">
    <property type="entry name" value="Aldolase_TIM"/>
</dbReference>
<dbReference type="InterPro" id="IPR035587">
    <property type="entry name" value="DUS-like_FMN-bd"/>
</dbReference>
<dbReference type="InterPro" id="IPR001269">
    <property type="entry name" value="DUS_fam"/>
</dbReference>
<dbReference type="InterPro" id="IPR024036">
    <property type="entry name" value="tRNA-dHydroUridine_Synthase_C"/>
</dbReference>
<dbReference type="InterPro" id="IPR018517">
    <property type="entry name" value="tRNA_hU_synthase_CS"/>
</dbReference>
<dbReference type="PANTHER" id="PTHR45846">
    <property type="entry name" value="TRNA-DIHYDROURIDINE(47) SYNTHASE [NAD(P)(+)]-LIKE"/>
    <property type="match status" value="1"/>
</dbReference>
<dbReference type="PANTHER" id="PTHR45846:SF1">
    <property type="entry name" value="TRNA-DIHYDROURIDINE(47) SYNTHASE [NAD(P)(+)]-LIKE"/>
    <property type="match status" value="1"/>
</dbReference>
<dbReference type="Pfam" id="PF01207">
    <property type="entry name" value="Dus"/>
    <property type="match status" value="1"/>
</dbReference>
<dbReference type="PIRSF" id="PIRSF006621">
    <property type="entry name" value="Dus"/>
    <property type="match status" value="1"/>
</dbReference>
<dbReference type="SUPFAM" id="SSF51395">
    <property type="entry name" value="FMN-linked oxidoreductases"/>
    <property type="match status" value="1"/>
</dbReference>
<dbReference type="PROSITE" id="PS01136">
    <property type="entry name" value="UPF0034"/>
    <property type="match status" value="1"/>
</dbReference>
<sequence>MNFKKGEVILAPMASYTHSAFRRLCRRLGADRTYTELISAVGVLRNGIPMKLAYFTEEERPIHIQVFGSNPEEIAQASVVIAKELKPDFIDINFGCSVPKVLRNKAAGYMLQCPPLMGEVVKETVEALKPYGIPVSAKIRLGFEKDEVERIVEELQKAGVSLIAIHARTAKQGFSGKALWHRIKEAKKVASVPIIGSGDVKSWRDIERMFEETECDGVMVGRAALSNPWIFKEFKEKRDIEVGLKERMDFILEELSMMTEYMSREKACAEIKSQIVQILKGVPNSRELKTYIVHAENCKELVKRIEEAKERELLYA</sequence>
<gene>
    <name type="primary">dus</name>
    <name type="ordered locus">aq_1598</name>
</gene>
<feature type="chain" id="PRO_0000162130" description="Probable tRNA-dihydrouridine synthase">
    <location>
        <begin position="1"/>
        <end position="316"/>
    </location>
</feature>
<feature type="active site" description="Proton donor" evidence="2">
    <location>
        <position position="96"/>
    </location>
</feature>
<feature type="binding site" evidence="1">
    <location>
        <begin position="12"/>
        <end position="14"/>
    </location>
    <ligand>
        <name>FMN</name>
        <dbReference type="ChEBI" id="CHEBI:58210"/>
    </ligand>
</feature>
<feature type="binding site" evidence="1">
    <location>
        <position position="65"/>
    </location>
    <ligand>
        <name>FMN</name>
        <dbReference type="ChEBI" id="CHEBI:58210"/>
    </ligand>
</feature>
<feature type="binding site" evidence="1">
    <location>
        <position position="138"/>
    </location>
    <ligand>
        <name>FMN</name>
        <dbReference type="ChEBI" id="CHEBI:58210"/>
    </ligand>
</feature>
<feature type="binding site" evidence="1">
    <location>
        <begin position="197"/>
        <end position="199"/>
    </location>
    <ligand>
        <name>FMN</name>
        <dbReference type="ChEBI" id="CHEBI:58210"/>
    </ligand>
</feature>
<feature type="binding site" evidence="1">
    <location>
        <begin position="221"/>
        <end position="222"/>
    </location>
    <ligand>
        <name>FMN</name>
        <dbReference type="ChEBI" id="CHEBI:58210"/>
    </ligand>
</feature>
<accession>O67533</accession>
<name>DUS_AQUAE</name>
<protein>
    <recommendedName>
        <fullName>Probable tRNA-dihydrouridine synthase</fullName>
        <ecNumber>1.3.1.-</ecNumber>
    </recommendedName>
</protein>